<organism>
    <name type="scientific">Sus scrofa</name>
    <name type="common">Pig</name>
    <dbReference type="NCBI Taxonomy" id="9823"/>
    <lineage>
        <taxon>Eukaryota</taxon>
        <taxon>Metazoa</taxon>
        <taxon>Chordata</taxon>
        <taxon>Craniata</taxon>
        <taxon>Vertebrata</taxon>
        <taxon>Euteleostomi</taxon>
        <taxon>Mammalia</taxon>
        <taxon>Eutheria</taxon>
        <taxon>Laurasiatheria</taxon>
        <taxon>Artiodactyla</taxon>
        <taxon>Suina</taxon>
        <taxon>Suidae</taxon>
        <taxon>Sus</taxon>
    </lineage>
</organism>
<proteinExistence type="evidence at transcript level"/>
<dbReference type="EMBL" id="AF092422">
    <property type="protein sequence ID" value="AAC61766.1"/>
    <property type="molecule type" value="mRNA"/>
</dbReference>
<dbReference type="EMBL" id="AH009271">
    <property type="protein sequence ID" value="AAF66822.1"/>
    <property type="molecule type" value="Genomic_DNA"/>
</dbReference>
<dbReference type="EMBL" id="AF167719">
    <property type="protein sequence ID" value="AAF89633.1"/>
    <property type="molecule type" value="mRNA"/>
</dbReference>
<dbReference type="EMBL" id="AF036908">
    <property type="protein sequence ID" value="AAB88825.1"/>
    <property type="molecule type" value="mRNA"/>
</dbReference>
<dbReference type="EMBL" id="U67739">
    <property type="protein sequence ID" value="AAB07892.1"/>
    <property type="molecule type" value="mRNA"/>
</dbReference>
<dbReference type="EMBL" id="AJ223162">
    <property type="protein sequence ID" value="CAA11142.1"/>
    <property type="molecule type" value="Genomic_DNA"/>
</dbReference>
<dbReference type="EMBL" id="AJ223163">
    <property type="protein sequence ID" value="CAA11143.1"/>
    <property type="molecule type" value="Genomic_DNA"/>
</dbReference>
<dbReference type="EMBL" id="U72070">
    <property type="protein sequence ID" value="AAC48707.1"/>
    <property type="molecule type" value="Genomic_DNA"/>
</dbReference>
<dbReference type="RefSeq" id="NP_001019758.1">
    <property type="nucleotide sequence ID" value="NM_001024587.1"/>
</dbReference>
<dbReference type="SMR" id="O02671"/>
<dbReference type="FunCoup" id="O02671">
    <property type="interactions" value="181"/>
</dbReference>
<dbReference type="STRING" id="9823.ENSSSCP00000022838"/>
<dbReference type="GlyCosmos" id="O02671">
    <property type="glycosylation" value="17 sites, No reported glycans"/>
</dbReference>
<dbReference type="GlyGen" id="O02671">
    <property type="glycosylation" value="19 sites"/>
</dbReference>
<dbReference type="PaxDb" id="9823-ENSSSCP00000022838"/>
<dbReference type="GeneID" id="396836"/>
<dbReference type="KEGG" id="ssc:396836"/>
<dbReference type="CTD" id="3953"/>
<dbReference type="eggNOG" id="ENOG502RK5B">
    <property type="taxonomic scope" value="Eukaryota"/>
</dbReference>
<dbReference type="InParanoid" id="O02671"/>
<dbReference type="OrthoDB" id="8964127at2759"/>
<dbReference type="Proteomes" id="UP000008227">
    <property type="component" value="Unplaced"/>
</dbReference>
<dbReference type="Proteomes" id="UP000314985">
    <property type="component" value="Unplaced"/>
</dbReference>
<dbReference type="Proteomes" id="UP000694570">
    <property type="component" value="Unplaced"/>
</dbReference>
<dbReference type="Proteomes" id="UP000694571">
    <property type="component" value="Unplaced"/>
</dbReference>
<dbReference type="Proteomes" id="UP000694720">
    <property type="component" value="Unplaced"/>
</dbReference>
<dbReference type="Proteomes" id="UP000694722">
    <property type="component" value="Unplaced"/>
</dbReference>
<dbReference type="Proteomes" id="UP000694723">
    <property type="component" value="Unplaced"/>
</dbReference>
<dbReference type="Proteomes" id="UP000694724">
    <property type="component" value="Unplaced"/>
</dbReference>
<dbReference type="Proteomes" id="UP000694725">
    <property type="component" value="Unplaced"/>
</dbReference>
<dbReference type="Proteomes" id="UP000694726">
    <property type="component" value="Unplaced"/>
</dbReference>
<dbReference type="Proteomes" id="UP000694727">
    <property type="component" value="Unplaced"/>
</dbReference>
<dbReference type="Proteomes" id="UP000694728">
    <property type="component" value="Unplaced"/>
</dbReference>
<dbReference type="GO" id="GO:0016323">
    <property type="term" value="C:basolateral plasma membrane"/>
    <property type="evidence" value="ECO:0007669"/>
    <property type="project" value="UniProtKB-SubCell"/>
</dbReference>
<dbReference type="GO" id="GO:0009897">
    <property type="term" value="C:external side of plasma membrane"/>
    <property type="evidence" value="ECO:0000318"/>
    <property type="project" value="GO_Central"/>
</dbReference>
<dbReference type="GO" id="GO:0043235">
    <property type="term" value="C:receptor complex"/>
    <property type="evidence" value="ECO:0000318"/>
    <property type="project" value="GO_Central"/>
</dbReference>
<dbReference type="GO" id="GO:0019955">
    <property type="term" value="F:cytokine binding"/>
    <property type="evidence" value="ECO:0000318"/>
    <property type="project" value="GO_Central"/>
</dbReference>
<dbReference type="GO" id="GO:0004896">
    <property type="term" value="F:cytokine receptor activity"/>
    <property type="evidence" value="ECO:0000318"/>
    <property type="project" value="GO_Central"/>
</dbReference>
<dbReference type="GO" id="GO:0038021">
    <property type="term" value="F:leptin receptor activity"/>
    <property type="evidence" value="ECO:0000250"/>
    <property type="project" value="UniProtKB"/>
</dbReference>
<dbReference type="GO" id="GO:0001525">
    <property type="term" value="P:angiogenesis"/>
    <property type="evidence" value="ECO:0000250"/>
    <property type="project" value="UniProtKB"/>
</dbReference>
<dbReference type="GO" id="GO:0098868">
    <property type="term" value="P:bone growth"/>
    <property type="evidence" value="ECO:0000250"/>
    <property type="project" value="UniProtKB"/>
</dbReference>
<dbReference type="GO" id="GO:0019221">
    <property type="term" value="P:cytokine-mediated signaling pathway"/>
    <property type="evidence" value="ECO:0000318"/>
    <property type="project" value="GO_Central"/>
</dbReference>
<dbReference type="GO" id="GO:0097009">
    <property type="term" value="P:energy homeostasis"/>
    <property type="evidence" value="ECO:0000250"/>
    <property type="project" value="UniProtKB"/>
</dbReference>
<dbReference type="GO" id="GO:0042593">
    <property type="term" value="P:glucose homeostasis"/>
    <property type="evidence" value="ECO:0000250"/>
    <property type="project" value="UniProtKB"/>
</dbReference>
<dbReference type="GO" id="GO:0033210">
    <property type="term" value="P:leptin-mediated signaling pathway"/>
    <property type="evidence" value="ECO:0000250"/>
    <property type="project" value="UniProtKB"/>
</dbReference>
<dbReference type="GO" id="GO:0010507">
    <property type="term" value="P:negative regulation of autophagy"/>
    <property type="evidence" value="ECO:0000250"/>
    <property type="project" value="UniProtKB"/>
</dbReference>
<dbReference type="GO" id="GO:0006909">
    <property type="term" value="P:phagocytosis"/>
    <property type="evidence" value="ECO:0000250"/>
    <property type="project" value="UniProtKB"/>
</dbReference>
<dbReference type="GO" id="GO:0008284">
    <property type="term" value="P:positive regulation of cell population proliferation"/>
    <property type="evidence" value="ECO:0000318"/>
    <property type="project" value="GO_Central"/>
</dbReference>
<dbReference type="GO" id="GO:0046850">
    <property type="term" value="P:regulation of bone remodeling"/>
    <property type="evidence" value="ECO:0000250"/>
    <property type="project" value="UniProtKB"/>
</dbReference>
<dbReference type="GO" id="GO:0060259">
    <property type="term" value="P:regulation of feeding behavior"/>
    <property type="evidence" value="ECO:0000250"/>
    <property type="project" value="UniProtKB"/>
</dbReference>
<dbReference type="GO" id="GO:0044321">
    <property type="term" value="P:response to leptin"/>
    <property type="evidence" value="ECO:0000250"/>
    <property type="project" value="UniProtKB"/>
</dbReference>
<dbReference type="GO" id="GO:0019953">
    <property type="term" value="P:sexual reproduction"/>
    <property type="evidence" value="ECO:0000250"/>
    <property type="project" value="UniProtKB"/>
</dbReference>
<dbReference type="GO" id="GO:0030217">
    <property type="term" value="P:T cell differentiation"/>
    <property type="evidence" value="ECO:0000250"/>
    <property type="project" value="UniProtKB"/>
</dbReference>
<dbReference type="CDD" id="cd00063">
    <property type="entry name" value="FN3"/>
    <property type="match status" value="1"/>
</dbReference>
<dbReference type="FunFam" id="2.60.40.10:FF:000494">
    <property type="entry name" value="Leptin receptor"/>
    <property type="match status" value="1"/>
</dbReference>
<dbReference type="FunFam" id="2.60.40.10:FF:000501">
    <property type="entry name" value="Leptin receptor"/>
    <property type="match status" value="1"/>
</dbReference>
<dbReference type="FunFam" id="2.60.40.10:FF:000515">
    <property type="entry name" value="Leptin receptor"/>
    <property type="match status" value="1"/>
</dbReference>
<dbReference type="FunFam" id="2.60.40.10:FF:000558">
    <property type="entry name" value="Leptin receptor"/>
    <property type="match status" value="1"/>
</dbReference>
<dbReference type="FunFam" id="2.60.40.10:FF:000568">
    <property type="entry name" value="Leptin receptor"/>
    <property type="match status" value="1"/>
</dbReference>
<dbReference type="FunFam" id="2.60.40.10:FF:000613">
    <property type="entry name" value="Leptin receptor"/>
    <property type="match status" value="1"/>
</dbReference>
<dbReference type="FunFam" id="2.60.40.10:FF:000688">
    <property type="entry name" value="Leptin receptor"/>
    <property type="match status" value="1"/>
</dbReference>
<dbReference type="Gene3D" id="2.60.40.10">
    <property type="entry name" value="Immunoglobulins"/>
    <property type="match status" value="7"/>
</dbReference>
<dbReference type="InterPro" id="IPR003961">
    <property type="entry name" value="FN3_dom"/>
</dbReference>
<dbReference type="InterPro" id="IPR036116">
    <property type="entry name" value="FN3_sf"/>
</dbReference>
<dbReference type="InterPro" id="IPR003529">
    <property type="entry name" value="Hematopoietin_rcpt_Gp130_CS"/>
</dbReference>
<dbReference type="InterPro" id="IPR003531">
    <property type="entry name" value="Hempt_rcpt_S_F1_CS"/>
</dbReference>
<dbReference type="InterPro" id="IPR013783">
    <property type="entry name" value="Ig-like_fold"/>
</dbReference>
<dbReference type="InterPro" id="IPR010457">
    <property type="entry name" value="IgC2-like_lig-bd"/>
</dbReference>
<dbReference type="InterPro" id="IPR041182">
    <property type="entry name" value="LEP-R_IGD"/>
</dbReference>
<dbReference type="PANTHER" id="PTHR23037">
    <property type="entry name" value="CYTOKINE RECEPTOR"/>
    <property type="match status" value="1"/>
</dbReference>
<dbReference type="PANTHER" id="PTHR23037:SF44">
    <property type="entry name" value="LEPTIN RECEPTOR"/>
    <property type="match status" value="1"/>
</dbReference>
<dbReference type="Pfam" id="PF00041">
    <property type="entry name" value="fn3"/>
    <property type="match status" value="1"/>
</dbReference>
<dbReference type="Pfam" id="PF06328">
    <property type="entry name" value="Lep_receptor_Ig"/>
    <property type="match status" value="1"/>
</dbReference>
<dbReference type="Pfam" id="PF18589">
    <property type="entry name" value="ObR_Ig"/>
    <property type="match status" value="2"/>
</dbReference>
<dbReference type="SMART" id="SM00060">
    <property type="entry name" value="FN3"/>
    <property type="match status" value="4"/>
</dbReference>
<dbReference type="SUPFAM" id="SSF49265">
    <property type="entry name" value="Fibronectin type III"/>
    <property type="match status" value="4"/>
</dbReference>
<dbReference type="PROSITE" id="PS50853">
    <property type="entry name" value="FN3"/>
    <property type="match status" value="4"/>
</dbReference>
<dbReference type="PROSITE" id="PS01353">
    <property type="entry name" value="HEMATOPO_REC_L_F2"/>
    <property type="match status" value="1"/>
</dbReference>
<feature type="signal peptide" evidence="3">
    <location>
        <begin position="1"/>
        <end position="21"/>
    </location>
</feature>
<feature type="chain" id="PRO_0000010907" description="Leptin receptor">
    <location>
        <begin position="22"/>
        <end position="1165"/>
    </location>
</feature>
<feature type="topological domain" description="Extracellular" evidence="3">
    <location>
        <begin position="22"/>
        <end position="838"/>
    </location>
</feature>
<feature type="transmembrane region" description="Helical" evidence="3">
    <location>
        <begin position="839"/>
        <end position="861"/>
    </location>
</feature>
<feature type="topological domain" description="Cytoplasmic" evidence="3">
    <location>
        <begin position="862"/>
        <end position="1165"/>
    </location>
</feature>
<feature type="domain" description="Fibronectin type-III 1" evidence="4">
    <location>
        <begin position="239"/>
        <end position="332"/>
    </location>
</feature>
<feature type="domain" description="Fibronectin type-III 2" evidence="4">
    <location>
        <begin position="539"/>
        <end position="634"/>
    </location>
</feature>
<feature type="domain" description="Fibronectin type-III 3" evidence="4">
    <location>
        <begin position="642"/>
        <end position="736"/>
    </location>
</feature>
<feature type="domain" description="Fibronectin type-III 4" evidence="4">
    <location>
        <begin position="740"/>
        <end position="834"/>
    </location>
</feature>
<feature type="region of interest" description="Leptin-binding" evidence="2">
    <location>
        <begin position="467"/>
        <end position="484"/>
    </location>
</feature>
<feature type="region of interest" description="Required for JAK2 activation" evidence="1">
    <location>
        <begin position="892"/>
        <end position="897"/>
    </location>
</feature>
<feature type="region of interest" description="Required for STAT3 phosphorylation" evidence="1">
    <location>
        <begin position="897"/>
        <end position="905"/>
    </location>
</feature>
<feature type="short sequence motif" description="WSXWS motif">
    <location>
        <begin position="622"/>
        <end position="626"/>
    </location>
</feature>
<feature type="short sequence motif" description="Box 1 motif">
    <location>
        <begin position="870"/>
        <end position="878"/>
    </location>
</feature>
<feature type="modified residue" description="Phosphoserine" evidence="2">
    <location>
        <position position="881"/>
    </location>
</feature>
<feature type="modified residue" description="Phosphotyrosine; by JAK2" evidence="1">
    <location>
        <position position="986"/>
    </location>
</feature>
<feature type="modified residue" description="Phosphotyrosine" evidence="1">
    <location>
        <position position="1079"/>
    </location>
</feature>
<feature type="modified residue" description="Phosphotyrosine; by JAK2" evidence="1">
    <location>
        <position position="1141"/>
    </location>
</feature>
<feature type="glycosylation site" description="N-linked (GlcNAc...) asparagine" evidence="3">
    <location>
        <position position="41"/>
    </location>
</feature>
<feature type="glycosylation site" description="N-linked (GlcNAc...) asparagine" evidence="3">
    <location>
        <position position="55"/>
    </location>
</feature>
<feature type="glycosylation site" description="N-linked (GlcNAc...) asparagine" evidence="3">
    <location>
        <position position="72"/>
    </location>
</feature>
<feature type="glycosylation site" description="N-linked (GlcNAc...) asparagine" evidence="3">
    <location>
        <position position="80"/>
    </location>
</feature>
<feature type="glycosylation site" description="N-linked (GlcNAc...) asparagine" evidence="3">
    <location>
        <position position="98"/>
    </location>
</feature>
<feature type="glycosylation site" description="N-linked (GlcNAc...) asparagine" evidence="3">
    <location>
        <position position="187"/>
    </location>
</feature>
<feature type="glycosylation site" description="N-linked (GlcNAc...) asparagine" evidence="3">
    <location>
        <position position="206"/>
    </location>
</feature>
<feature type="glycosylation site" description="N-linked (GlcNAc...) asparagine" evidence="3">
    <location>
        <position position="276"/>
    </location>
</feature>
<feature type="glycosylation site" description="N-linked (GlcNAc...) asparagine" evidence="3">
    <location>
        <position position="347"/>
    </location>
</feature>
<feature type="glycosylation site" description="N-linked (GlcNAc...) asparagine" evidence="3">
    <location>
        <position position="397"/>
    </location>
</feature>
<feature type="glycosylation site" description="N-linked (GlcNAc...) asparagine" evidence="3">
    <location>
        <position position="433"/>
    </location>
</feature>
<feature type="glycosylation site" description="N-linked (GlcNAc...) asparagine" evidence="3">
    <location>
        <position position="624"/>
    </location>
</feature>
<feature type="glycosylation site" description="N-linked (GlcNAc...) asparagine" evidence="3">
    <location>
        <position position="659"/>
    </location>
</feature>
<feature type="glycosylation site" description="N-linked (GlcNAc...) asparagine" evidence="3">
    <location>
        <position position="670"/>
    </location>
</feature>
<feature type="glycosylation site" description="N-linked (GlcNAc...) asparagine" evidence="3">
    <location>
        <position position="697"/>
    </location>
</feature>
<feature type="glycosylation site" description="N-linked (GlcNAc...) asparagine" evidence="3">
    <location>
        <position position="728"/>
    </location>
</feature>
<feature type="glycosylation site" description="N-linked (GlcNAc...) asparagine" evidence="3">
    <location>
        <position position="750"/>
    </location>
</feature>
<feature type="disulfide bond" evidence="2">
    <location>
        <begin position="37"/>
        <end position="90"/>
    </location>
</feature>
<feature type="disulfide bond" evidence="2">
    <location>
        <begin position="89"/>
        <end position="99"/>
    </location>
</feature>
<feature type="disulfide bond" evidence="2">
    <location>
        <begin position="131"/>
        <end position="142"/>
    </location>
</feature>
<feature type="disulfide bond" evidence="2">
    <location>
        <begin position="186"/>
        <end position="196"/>
    </location>
</feature>
<feature type="disulfide bond" evidence="2">
    <location>
        <begin position="188"/>
        <end position="193"/>
    </location>
</feature>
<feature type="disulfide bond" evidence="2">
    <location>
        <begin position="352"/>
        <end position="412"/>
    </location>
</feature>
<feature type="disulfide bond" evidence="2">
    <location>
        <begin position="413"/>
        <end position="418"/>
    </location>
</feature>
<feature type="disulfide bond" evidence="2">
    <location>
        <begin position="436"/>
        <end position="447"/>
    </location>
</feature>
<feature type="disulfide bond" evidence="2">
    <location>
        <begin position="473"/>
        <end position="528"/>
    </location>
</feature>
<feature type="disulfide bond" evidence="2">
    <location>
        <begin position="488"/>
        <end position="498"/>
    </location>
</feature>
<feature type="sequence conflict" description="In Ref. 3; AAF89633." evidence="5" ref="3">
    <original>SVA</original>
    <variation>CVV</variation>
    <location>
        <begin position="7"/>
        <end position="9"/>
    </location>
</feature>
<feature type="sequence conflict" description="In Ref. 3; AAF89633 and 4; AAB07892." evidence="5" ref="3 4">
    <original>T</original>
    <variation>M</variation>
    <location>
        <position position="69"/>
    </location>
</feature>
<feature type="sequence conflict" description="In Ref. 1; AAC61766." evidence="5" ref="1">
    <original>S</original>
    <variation>I</variation>
    <location>
        <position position="73"/>
    </location>
</feature>
<feature type="sequence conflict" description="In Ref. 3; AAF89633." evidence="5" ref="3">
    <original>E</original>
    <variation>K</variation>
    <location>
        <position position="283"/>
    </location>
</feature>
<feature type="sequence conflict" description="In Ref. 3; AAF89633." evidence="5" ref="3">
    <original>F</original>
    <variation>L</variation>
    <location>
        <position position="350"/>
    </location>
</feature>
<feature type="sequence conflict" description="In Ref. 3; AAF89633." evidence="5" ref="3">
    <original>S</original>
    <variation>P</variation>
    <location>
        <position position="362"/>
    </location>
</feature>
<feature type="sequence conflict" description="In Ref. 3; AAF89633." evidence="5" ref="3">
    <original>K</original>
    <variation>E</variation>
    <location>
        <position position="365"/>
    </location>
</feature>
<feature type="sequence conflict" description="In Ref. 3; AAF89633." evidence="5" ref="3">
    <original>G</original>
    <variation>S</variation>
    <location>
        <position position="385"/>
    </location>
</feature>
<feature type="sequence conflict" description="In Ref. 4; AAB88825." evidence="5" ref="4">
    <original>R</original>
    <variation>C</variation>
    <location>
        <position position="974"/>
    </location>
</feature>
<feature type="sequence conflict" description="In Ref. 4; AAB88825." evidence="5" ref="4">
    <original>T</original>
    <variation>I</variation>
    <location>
        <position position="1047"/>
    </location>
</feature>
<keyword id="KW-1003">Cell membrane</keyword>
<keyword id="KW-1015">Disulfide bond</keyword>
<keyword id="KW-0325">Glycoprotein</keyword>
<keyword id="KW-0472">Membrane</keyword>
<keyword id="KW-0550">Obesity</keyword>
<keyword id="KW-0597">Phosphoprotein</keyword>
<keyword id="KW-0675">Receptor</keyword>
<keyword id="KW-1185">Reference proteome</keyword>
<keyword id="KW-0677">Repeat</keyword>
<keyword id="KW-0732">Signal</keyword>
<keyword id="KW-0812">Transmembrane</keyword>
<keyword id="KW-1133">Transmembrane helix</keyword>
<accession>O02671</accession>
<accession>Q95257</accession>
<accession>Q9MZS2</accession>
<accession>Q9N1F9</accession>
<accession>Q9XSN9</accession>
<sequence>MTCPKFSVALLHWEFIYVITAFDLAYPITPWKFKLSCMPPNTTYDFLLPAGISKNTSTLNGHDEAVVETELNSSGTYLSNLSSKTTFHCCFWSEEDKNCSVHADNIAGKAFVSAVNSLVFQQTGANWNIQCWMKEDLKLFICYMESLFKNPFKNYDLKVHLLYVLLEVLEGSPLLPQKGSFQSVQCNCSARECCECHVPVSAAKLNYTLLMYLKITSGGAVFHSPLMSVQPINVVKPDPPLGLHMEITDTGNLKISWSSPTLVPFQLQYQVKYSENSTTNMREADEIVSDTSLLVDSVLPGSSYEVQVRGKRLDGPGIWSDWSTPFTFTTQDVIYFPPKILTSVGSNISFHCIYKNENKIVSSKKIVWWMNLAEKIPQSQYDVVGDHVSKVTFPNMNATKPRGKFTYDAVYCCNEHECHHRYAELYVIDVNINISCETDGYLTKMTCRWSTNAIQSLVGSTLQLRYHRSSLYCSDVPSVHPISEPKDCQLQRDGFYECIFQPIFLLSGYTMWIRINHPLGSLDSPPTCVIPDSVVKPLPPSSVKAEITAKIGLLKISWEKPVFPENNLQFQIRYGLSGKEVQWKIYEVYDTKLKSTSLPVPDLCAVYAVQVRCKRLDGLGYWSNWSTPAYTVVTDVKVPIRGPEFWRIINEDATKKERNITLLWKPLMKNDSLCSVRSYVVKHHTSRHGTWSEDVGNHTKLTFLWTEQAHSVTVLAVNSIGASSANFNLTFSWPMSKVNIVQSLSAYPLNSSCVGLSWLLSPSDYNLMYFILEWKILNEDHEIKWLRIPSSVKKYYIHDHFIPIEKYQFSLYPIFMEGVGKPKIINSFTQDGEKHRNDAGLYVIVPIIISSSILLLGTLLMSHQRMKKLFWEDVPNPKNCSWAQGLNFQKPETFEHLFIKHTESVTFGPLLLEPETISEDISVDTSWKNKDEMVPPTTVSLLLTTPDLEKSSICISDQRSSAHFSEAESMEITREDENRRQPSIKYATLLSSPKSGETEQEQELVSSLVSRCFSSSNSLPKESFSNSSWEIETQAFFILSDQHPNMTSPHLSFSEGLDELMKFEGNFPKEHNDERSVYYLGVTSIKKRESDVFLTDESRVRCPFPAHCLFADIKILQESCSHLVENNFNLGTSGQKTFVSYMPQFQTCSTQTQKIMENKMYDLTV</sequence>
<name>LEPR_PIG</name>
<evidence type="ECO:0000250" key="1">
    <source>
        <dbReference type="UniProtKB" id="P48356"/>
    </source>
</evidence>
<evidence type="ECO:0000250" key="2">
    <source>
        <dbReference type="UniProtKB" id="P48357"/>
    </source>
</evidence>
<evidence type="ECO:0000255" key="3"/>
<evidence type="ECO:0000255" key="4">
    <source>
        <dbReference type="PROSITE-ProRule" id="PRU00316"/>
    </source>
</evidence>
<evidence type="ECO:0000305" key="5"/>
<comment type="function">
    <text evidence="1 2">Receptor for hormone LEP/leptin (By similarity). On ligand binding, mediates LEP central and peripheral effects through the activation of different signaling pathways such as JAK2/STAT3 and MAPK cascade/FOS. In the hypothalamus, LEP acts as an appetite-regulating factor that induces a decrease in food intake and an increase in energy consumption by inducing anorexinogenic factors and suppressing orexigenic neuropeptides, also regulates bone mass and secretion of hypothalamo-pituitary-adrenal hormones. In the periphery, increases basal metabolism, influences reproductive function, regulates pancreatic beta-cell function and insulin secretion, is pro-angiogenic and affects innate and adaptive immunity (By similarity). Control of energy homeostasis and melanocortin production (stimulation of POMC and full repression of AgRP transcription) is mediated by STAT3 signaling, whereas distinct signals regulate NPY and the control of fertility, growth and glucose homeostasis. Involved in the regulation of counter-regulatory response to hypoglycemia by inhibiting neurons of the parabrachial nucleus. Has a specific effect on T lymphocyte responses, differentially regulating the proliferation of naive and memory T-cells. Leptin increases Th1 and suppresses Th2 cytokine production (By similarity).</text>
</comment>
<comment type="subunit">
    <text evidence="1 2">Present as a mixture of monomers and dimers. The phosphorylated receptor binds a number of SH2 domain-containing proteins such as JAK2, STAT3, PTPN11, and SOCS3 (By similarity). Interaction with SOCS3 inhibits JAK/STAT signaling and MAPK cascade (By similarity).</text>
</comment>
<comment type="subcellular location">
    <subcellularLocation>
        <location evidence="2">Cell membrane</location>
        <topology evidence="2">Single-pass type I membrane protein</topology>
    </subcellularLocation>
    <subcellularLocation>
        <location evidence="2">Basolateral cell membrane</location>
    </subcellularLocation>
</comment>
<comment type="tissue specificity">
    <text>Kidney, liver, spleen, lung, brain, testis, uterus, ovary, corpus luteum, theca and granulosa cells.</text>
</comment>
<comment type="domain">
    <text>The cytoplasmic domain may be essential for intracellular signal transduction by activation of JAK tyrosine kinase and STATs.</text>
</comment>
<comment type="domain">
    <text>The WSXWS motif appears to be necessary for proper protein folding and thereby efficient intracellular transport and cell-surface receptor binding.</text>
</comment>
<comment type="domain">
    <text>The box 1 motif is required for JAK interaction and/or activation.</text>
</comment>
<comment type="PTM">
    <text evidence="1">On ligand binding, phosphorylated on two conserved C-terminal tyrosine residues by JAK2. Tyr-986 is required for complete binding and activation of PTPN11, ERK/FOS activation,for interaction with SOCS3 and SOCS3 mediated inhibition of leptin signaling. Phosphorylation on Tyr-1141 is required for STAT3 binding/activation. Phosphorylation of Tyr-1079 has a more accessory role.</text>
</comment>
<comment type="similarity">
    <text evidence="5">Belongs to the type I cytokine receptor family. Type 2 subfamily.</text>
</comment>
<protein>
    <recommendedName>
        <fullName>Leptin receptor</fullName>
        <shortName>LEP-R</shortName>
    </recommendedName>
    <alternativeName>
        <fullName>OB receptor</fullName>
        <shortName>OB-R</shortName>
    </alternativeName>
    <cdAntigenName>CD295</cdAntigenName>
</protein>
<gene>
    <name type="primary">LEPR</name>
    <name type="synonym">OBR</name>
</gene>
<reference key="1">
    <citation type="journal article" date="2000" name="Mol. Reprod. Dev.">
        <title>Porcine leptin receptor: molecular structure and expression in the ovary.</title>
        <authorList>
            <person name="Ruiz-Cortes Z.T."/>
            <person name="Men T."/>
            <person name="Palin M.-F."/>
            <person name="Downey B.R."/>
            <person name="Lacroix D.A."/>
            <person name="Murphy B.D."/>
        </authorList>
    </citation>
    <scope>NUCLEOTIDE SEQUENCE [MRNA]</scope>
    <source>
        <tissue>Liver</tissue>
    </source>
</reference>
<reference key="2">
    <citation type="submission" date="1999-09" db="EMBL/GenBank/DDBJ databases">
        <title>Porcine leptin receptor intron 3, partial.</title>
        <authorList>
            <person name="Lacroix D.A."/>
            <person name="Gevry N.Y."/>
            <person name="Ruiz-Cortes Z.T."/>
            <person name="Murphy B.D."/>
        </authorList>
    </citation>
    <scope>NUCLEOTIDE SEQUENCE [GENOMIC DNA] OF 1-123</scope>
    <source>
        <strain>Yorkshire X Meishan</strain>
    </source>
</reference>
<reference key="3">
    <citation type="submission" date="1999-07" db="EMBL/GenBank/DDBJ databases">
        <title>Expression, detection, and partial cloning of porcine leptin receptor (OBR) gene.</title>
        <authorList>
            <person name="Hu X."/>
            <person name="Dai R."/>
            <person name="Li N."/>
            <person name="Wu C."/>
        </authorList>
    </citation>
    <scope>NUCLEOTIDE SEQUENCE [MRNA] OF 7-854</scope>
    <source>
        <tissue>Liver</tissue>
    </source>
</reference>
<reference key="4">
    <citation type="submission" date="1997-12" db="EMBL/GenBank/DDBJ databases">
        <title>Partial cDNA sequence of the porcine leptin receptor.</title>
        <authorList>
            <person name="Matteri R.L."/>
            <person name="Carroll J.A."/>
        </authorList>
    </citation>
    <scope>NUCLEOTIDE SEQUENCE [MRNA] OF 13-159 AND 916-1088</scope>
    <source>
        <tissue>Hypothalamus</tissue>
    </source>
</reference>
<reference key="5">
    <citation type="journal article" date="1998" name="Anim. Genet.">
        <title>HpaII and RsaI PCR-RFLPs within an intron of the porcine leptin receptor gene (LEPR) and its linkage mapping.</title>
        <authorList>
            <person name="Stratil A."/>
            <person name="Kopecny M."/>
            <person name="Moser G."/>
            <person name="Schroffel J. Jr."/>
            <person name="Cepica S."/>
        </authorList>
    </citation>
    <scope>NUCLEOTIDE SEQUENCE [GENOMIC DNA] OF 109-123</scope>
</reference>
<reference key="6">
    <citation type="journal article" date="1997" name="Mamm. Genome">
        <title>The leptin receptor gene (LEPR) maps to porcine chromosome 6.</title>
        <authorList>
            <person name="Ernst C.W."/>
            <person name="Kapke P.A."/>
            <person name="Yerle M."/>
            <person name="Rothschild M.F."/>
        </authorList>
    </citation>
    <scope>NUCLEOTIDE SEQUENCE [GENOMIC DNA] OF 408-470</scope>
</reference>